<feature type="chain" id="PRO_0000215760" description="ATP-dependent Clp protease adapter protein ClpS">
    <location>
        <begin position="1"/>
        <end position="106"/>
    </location>
</feature>
<protein>
    <recommendedName>
        <fullName evidence="1">ATP-dependent Clp protease adapter protein ClpS</fullName>
    </recommendedName>
</protein>
<sequence>MSKNFEWITPDSDLLEKEITQIQPPKKYNVVLNNDDYTPMDFVIDVLERFFSHDLDKATQIMLKVHYEGKAICGTYSAEIAETKVAQVTMYSRENEHPLLCTMEQA</sequence>
<name>CLPS_VIBVY</name>
<accession>Q7MJ40</accession>
<reference key="1">
    <citation type="journal article" date="2003" name="Genome Res.">
        <title>Comparative genome analysis of Vibrio vulnificus, a marine pathogen.</title>
        <authorList>
            <person name="Chen C.-Y."/>
            <person name="Wu K.-M."/>
            <person name="Chang Y.-C."/>
            <person name="Chang C.-H."/>
            <person name="Tsai H.-C."/>
            <person name="Liao T.-L."/>
            <person name="Liu Y.-M."/>
            <person name="Chen H.-J."/>
            <person name="Shen A.B.-T."/>
            <person name="Li J.-C."/>
            <person name="Su T.-L."/>
            <person name="Shao C.-P."/>
            <person name="Lee C.-T."/>
            <person name="Hor L.-I."/>
            <person name="Tsai S.-F."/>
        </authorList>
    </citation>
    <scope>NUCLEOTIDE SEQUENCE [LARGE SCALE GENOMIC DNA]</scope>
    <source>
        <strain>YJ016</strain>
    </source>
</reference>
<proteinExistence type="inferred from homology"/>
<organism>
    <name type="scientific">Vibrio vulnificus (strain YJ016)</name>
    <dbReference type="NCBI Taxonomy" id="196600"/>
    <lineage>
        <taxon>Bacteria</taxon>
        <taxon>Pseudomonadati</taxon>
        <taxon>Pseudomonadota</taxon>
        <taxon>Gammaproteobacteria</taxon>
        <taxon>Vibrionales</taxon>
        <taxon>Vibrionaceae</taxon>
        <taxon>Vibrio</taxon>
    </lineage>
</organism>
<evidence type="ECO:0000255" key="1">
    <source>
        <dbReference type="HAMAP-Rule" id="MF_00302"/>
    </source>
</evidence>
<dbReference type="EMBL" id="BA000037">
    <property type="protein sequence ID" value="BAC95087.1"/>
    <property type="molecule type" value="Genomic_DNA"/>
</dbReference>
<dbReference type="RefSeq" id="WP_011080003.1">
    <property type="nucleotide sequence ID" value="NC_005139.1"/>
</dbReference>
<dbReference type="SMR" id="Q7MJ40"/>
<dbReference type="STRING" id="672.VV93_v1c20330"/>
<dbReference type="GeneID" id="93896318"/>
<dbReference type="KEGG" id="vvy:VV2323"/>
<dbReference type="eggNOG" id="COG2127">
    <property type="taxonomic scope" value="Bacteria"/>
</dbReference>
<dbReference type="HOGENOM" id="CLU_134358_2_1_6"/>
<dbReference type="Proteomes" id="UP000002675">
    <property type="component" value="Chromosome I"/>
</dbReference>
<dbReference type="GO" id="GO:0030163">
    <property type="term" value="P:protein catabolic process"/>
    <property type="evidence" value="ECO:0007669"/>
    <property type="project" value="InterPro"/>
</dbReference>
<dbReference type="GO" id="GO:0006508">
    <property type="term" value="P:proteolysis"/>
    <property type="evidence" value="ECO:0007669"/>
    <property type="project" value="UniProtKB-UniRule"/>
</dbReference>
<dbReference type="FunFam" id="3.30.1390.10:FF:000002">
    <property type="entry name" value="ATP-dependent Clp protease adapter protein ClpS"/>
    <property type="match status" value="1"/>
</dbReference>
<dbReference type="Gene3D" id="3.30.1390.10">
    <property type="match status" value="1"/>
</dbReference>
<dbReference type="HAMAP" id="MF_00302">
    <property type="entry name" value="ClpS"/>
    <property type="match status" value="1"/>
</dbReference>
<dbReference type="InterPro" id="IPR022935">
    <property type="entry name" value="ClpS"/>
</dbReference>
<dbReference type="InterPro" id="IPR003769">
    <property type="entry name" value="ClpS_core"/>
</dbReference>
<dbReference type="InterPro" id="IPR014719">
    <property type="entry name" value="Ribosomal_bL12_C/ClpS-like"/>
</dbReference>
<dbReference type="NCBIfam" id="NF000670">
    <property type="entry name" value="PRK00033.1-3"/>
    <property type="match status" value="1"/>
</dbReference>
<dbReference type="NCBIfam" id="NF000672">
    <property type="entry name" value="PRK00033.1-5"/>
    <property type="match status" value="1"/>
</dbReference>
<dbReference type="PANTHER" id="PTHR33473:SF19">
    <property type="entry name" value="ATP-DEPENDENT CLP PROTEASE ADAPTER PROTEIN CLPS"/>
    <property type="match status" value="1"/>
</dbReference>
<dbReference type="PANTHER" id="PTHR33473">
    <property type="entry name" value="ATP-DEPENDENT CLP PROTEASE ADAPTER PROTEIN CLPS1, CHLOROPLASTIC"/>
    <property type="match status" value="1"/>
</dbReference>
<dbReference type="Pfam" id="PF02617">
    <property type="entry name" value="ClpS"/>
    <property type="match status" value="1"/>
</dbReference>
<dbReference type="SUPFAM" id="SSF54736">
    <property type="entry name" value="ClpS-like"/>
    <property type="match status" value="1"/>
</dbReference>
<gene>
    <name evidence="1" type="primary">clpS</name>
    <name type="ordered locus">VV2323</name>
</gene>
<comment type="function">
    <text evidence="1">Involved in the modulation of the specificity of the ClpAP-mediated ATP-dependent protein degradation.</text>
</comment>
<comment type="subunit">
    <text evidence="1">Binds to the N-terminal domain of the chaperone ClpA.</text>
</comment>
<comment type="similarity">
    <text evidence="1">Belongs to the ClpS family.</text>
</comment>